<accession>D4AQT0</accession>
<organism>
    <name type="scientific">Arthroderma benhamiae (strain ATCC MYA-4681 / CBS 112371)</name>
    <name type="common">Trichophyton mentagrophytes</name>
    <dbReference type="NCBI Taxonomy" id="663331"/>
    <lineage>
        <taxon>Eukaryota</taxon>
        <taxon>Fungi</taxon>
        <taxon>Dikarya</taxon>
        <taxon>Ascomycota</taxon>
        <taxon>Pezizomycotina</taxon>
        <taxon>Eurotiomycetes</taxon>
        <taxon>Eurotiomycetidae</taxon>
        <taxon>Onygenales</taxon>
        <taxon>Arthrodermataceae</taxon>
        <taxon>Trichophyton</taxon>
    </lineage>
</organism>
<feature type="chain" id="PRO_0000412129" description="Probable dipeptidyl-aminopeptidase B">
    <location>
        <begin position="1"/>
        <end position="909"/>
    </location>
</feature>
<feature type="topological domain" description="Cytoplasmic" evidence="2">
    <location>
        <begin position="1"/>
        <end position="94"/>
    </location>
</feature>
<feature type="transmembrane region" description="Helical; Signal-anchor for type II membrane protein" evidence="2">
    <location>
        <begin position="95"/>
        <end position="115"/>
    </location>
</feature>
<feature type="topological domain" description="Vacuolar" evidence="2">
    <location>
        <begin position="116"/>
        <end position="909"/>
    </location>
</feature>
<feature type="region of interest" description="Disordered" evidence="4">
    <location>
        <begin position="1"/>
        <end position="63"/>
    </location>
</feature>
<feature type="region of interest" description="Disordered" evidence="4">
    <location>
        <begin position="123"/>
        <end position="144"/>
    </location>
</feature>
<feature type="compositionally biased region" description="Low complexity" evidence="4">
    <location>
        <begin position="27"/>
        <end position="38"/>
    </location>
</feature>
<feature type="compositionally biased region" description="Polar residues" evidence="4">
    <location>
        <begin position="123"/>
        <end position="134"/>
    </location>
</feature>
<feature type="active site" description="Charge relay system" evidence="3">
    <location>
        <position position="760"/>
    </location>
</feature>
<feature type="active site" description="Charge relay system" evidence="3">
    <location>
        <position position="837"/>
    </location>
</feature>
<feature type="active site" description="Charge relay system" evidence="3">
    <location>
        <position position="870"/>
    </location>
</feature>
<feature type="glycosylation site" description="N-linked (GlcNAc...) asparagine" evidence="2">
    <location>
        <position position="121"/>
    </location>
</feature>
<feature type="glycosylation site" description="N-linked (GlcNAc...) asparagine" evidence="2">
    <location>
        <position position="207"/>
    </location>
</feature>
<feature type="glycosylation site" description="N-linked (GlcNAc...) asparagine" evidence="2">
    <location>
        <position position="303"/>
    </location>
</feature>
<feature type="glycosylation site" description="N-linked (GlcNAc...) asparagine" evidence="2">
    <location>
        <position position="355"/>
    </location>
</feature>
<feature type="glycosylation site" description="N-linked (GlcNAc...) asparagine" evidence="2">
    <location>
        <position position="814"/>
    </location>
</feature>
<feature type="glycosylation site" description="N-linked (GlcNAc...) asparagine" evidence="2">
    <location>
        <position position="819"/>
    </location>
</feature>
<feature type="glycosylation site" description="N-linked (GlcNAc...) asparagine" evidence="2">
    <location>
        <position position="822"/>
    </location>
</feature>
<feature type="glycosylation site" description="N-linked (GlcNAc...) asparagine" evidence="2">
    <location>
        <position position="888"/>
    </location>
</feature>
<proteinExistence type="inferred from homology"/>
<sequence>MRVGSRINDEEAMPLTAPESRARDSIDSSSTASISLTLVEGASHATTEPSKPAHNHNGRAQGNYAEKYRDDLEEDWEEDNYIPSNGKSNQRRTLIVFWLLVALCVGGWAVAFLFFVTSPGNKTSTSPHSGSNSPEGDVTKPGIPATGKKIPLDDAIGGVWSPAEHTISWITGAKGEDGLLLQKSEGGTGPYLHVEDVRNIHGTQSNNNSIVLMKESVFFVNDERISPEKVWPSPDLKTVLAMTREKKNWRHSFTGLYWLFDVETQTAQPLDPDAPNGRIQLATWSPTSDAVAFTRDNNLYIRNLTSKSVKAITTDGGTNLFYGIPDWVYEEEVFEGNCATWWSLDGKYISYLRTNETLVPEFPIDFYLSSPPGYSPKPNEESYPYVQQIKYPKAGAPNPTVNLQFYDVEREESFSVDVKDTLKDDDRLIVEVIPGSKGKVLVRETNRESYIVKVAVIDANKREGKIVRSDNIDEIDGGWVEPSHTTTYIPADPSAGRPDDGYIDTVIHEGYIHLAYFTPLENPKPKMLTTGKWEVVAAPSGVDLKNNVVYFVATKESPIDRHVYSVKLDGSELQMLKDSDKSAYYDVSFSHGAGYMLLKYQGPQIPWQKLISSPSNADNYIEILEENKKLAKLSNEFSLPSLHYSTINVDGFELPVVERRPPNFDETKKYPVLFQLYGGPGSQTVNKKFLVNFQTYVASSLGYIVVTVDGRGTGFNGRKFKCIVRRNLGHYESHDQIQAAKAWGKKPYVDKTRMAIWGWSYGGFMTLKTLEQDAGETFQYGMAVAPVTNWRYYDSVYTERYMHMPQNNEGGYENASISNATNLSQNTRFLIMHGSADDNVHFQNTLTLLDKLDILGVHNYDMHVFPDSNHGIYFHHAYKMVHQRKYFNLSFLGHGFFSFYSNFLPIRSF</sequence>
<dbReference type="EC" id="3.4.14.5"/>
<dbReference type="EMBL" id="ABSU01000005">
    <property type="protein sequence ID" value="EFE34824.1"/>
    <property type="molecule type" value="Genomic_DNA"/>
</dbReference>
<dbReference type="RefSeq" id="XP_003015464.1">
    <property type="nucleotide sequence ID" value="XM_003015418.1"/>
</dbReference>
<dbReference type="SMR" id="D4AQT0"/>
<dbReference type="STRING" id="663331.D4AQT0"/>
<dbReference type="ESTHER" id="artbc-dapb">
    <property type="family name" value="DPP4N_Peptidase_S9"/>
</dbReference>
<dbReference type="GlyCosmos" id="D4AQT0">
    <property type="glycosylation" value="8 sites, No reported glycans"/>
</dbReference>
<dbReference type="GeneID" id="9521191"/>
<dbReference type="KEGG" id="abe:ARB_06590"/>
<dbReference type="eggNOG" id="KOG2100">
    <property type="taxonomic scope" value="Eukaryota"/>
</dbReference>
<dbReference type="HOGENOM" id="CLU_006105_0_1_1"/>
<dbReference type="OMA" id="MRTPQEN"/>
<dbReference type="Proteomes" id="UP000008866">
    <property type="component" value="Unassembled WGS sequence"/>
</dbReference>
<dbReference type="GO" id="GO:0005886">
    <property type="term" value="C:plasma membrane"/>
    <property type="evidence" value="ECO:0007669"/>
    <property type="project" value="TreeGrafter"/>
</dbReference>
<dbReference type="GO" id="GO:0005774">
    <property type="term" value="C:vacuolar membrane"/>
    <property type="evidence" value="ECO:0007669"/>
    <property type="project" value="UniProtKB-SubCell"/>
</dbReference>
<dbReference type="GO" id="GO:0004177">
    <property type="term" value="F:aminopeptidase activity"/>
    <property type="evidence" value="ECO:0007669"/>
    <property type="project" value="UniProtKB-KW"/>
</dbReference>
<dbReference type="GO" id="GO:0008239">
    <property type="term" value="F:dipeptidyl-peptidase activity"/>
    <property type="evidence" value="ECO:0007669"/>
    <property type="project" value="UniProtKB-EC"/>
</dbReference>
<dbReference type="GO" id="GO:0004252">
    <property type="term" value="F:serine-type endopeptidase activity"/>
    <property type="evidence" value="ECO:0007669"/>
    <property type="project" value="InterPro"/>
</dbReference>
<dbReference type="GO" id="GO:0006508">
    <property type="term" value="P:proteolysis"/>
    <property type="evidence" value="ECO:0007669"/>
    <property type="project" value="UniProtKB-KW"/>
</dbReference>
<dbReference type="FunFam" id="3.40.50.1820:FF:000003">
    <property type="entry name" value="Dipeptidyl peptidase 4"/>
    <property type="match status" value="1"/>
</dbReference>
<dbReference type="Gene3D" id="3.40.50.1820">
    <property type="entry name" value="alpha/beta hydrolase"/>
    <property type="match status" value="1"/>
</dbReference>
<dbReference type="Gene3D" id="2.140.10.30">
    <property type="entry name" value="Dipeptidylpeptidase IV, N-terminal domain"/>
    <property type="match status" value="1"/>
</dbReference>
<dbReference type="InterPro" id="IPR029058">
    <property type="entry name" value="AB_hydrolase_fold"/>
</dbReference>
<dbReference type="InterPro" id="IPR002471">
    <property type="entry name" value="Pept_S9_AS"/>
</dbReference>
<dbReference type="InterPro" id="IPR001375">
    <property type="entry name" value="Peptidase_S9_cat"/>
</dbReference>
<dbReference type="InterPro" id="IPR002469">
    <property type="entry name" value="Peptidase_S9B_N"/>
</dbReference>
<dbReference type="InterPro" id="IPR050278">
    <property type="entry name" value="Serine_Prot_S9B/DPPIV"/>
</dbReference>
<dbReference type="PANTHER" id="PTHR11731:SF200">
    <property type="entry name" value="DIPEPTIDYL PEPTIDASE 10, ISOFORM B"/>
    <property type="match status" value="1"/>
</dbReference>
<dbReference type="PANTHER" id="PTHR11731">
    <property type="entry name" value="PROTEASE FAMILY S9B,C DIPEPTIDYL-PEPTIDASE IV-RELATED"/>
    <property type="match status" value="1"/>
</dbReference>
<dbReference type="Pfam" id="PF00930">
    <property type="entry name" value="DPPIV_N"/>
    <property type="match status" value="1"/>
</dbReference>
<dbReference type="Pfam" id="PF00326">
    <property type="entry name" value="Peptidase_S9"/>
    <property type="match status" value="1"/>
</dbReference>
<dbReference type="SUPFAM" id="SSF53474">
    <property type="entry name" value="alpha/beta-Hydrolases"/>
    <property type="match status" value="1"/>
</dbReference>
<dbReference type="SUPFAM" id="SSF82171">
    <property type="entry name" value="DPP6 N-terminal domain-like"/>
    <property type="match status" value="1"/>
</dbReference>
<dbReference type="PROSITE" id="PS00708">
    <property type="entry name" value="PRO_ENDOPEP_SER"/>
    <property type="match status" value="1"/>
</dbReference>
<evidence type="ECO:0000250" key="1"/>
<evidence type="ECO:0000255" key="2"/>
<evidence type="ECO:0000255" key="3">
    <source>
        <dbReference type="PROSITE-ProRule" id="PRU10084"/>
    </source>
</evidence>
<evidence type="ECO:0000256" key="4">
    <source>
        <dbReference type="SAM" id="MobiDB-lite"/>
    </source>
</evidence>
<evidence type="ECO:0000305" key="5"/>
<reference key="1">
    <citation type="journal article" date="2011" name="Genome Biol.">
        <title>Comparative and functional genomics provide insights into the pathogenicity of dermatophytic fungi.</title>
        <authorList>
            <person name="Burmester A."/>
            <person name="Shelest E."/>
            <person name="Gloeckner G."/>
            <person name="Heddergott C."/>
            <person name="Schindler S."/>
            <person name="Staib P."/>
            <person name="Heidel A."/>
            <person name="Felder M."/>
            <person name="Petzold A."/>
            <person name="Szafranski K."/>
            <person name="Feuermann M."/>
            <person name="Pedruzzi I."/>
            <person name="Priebe S."/>
            <person name="Groth M."/>
            <person name="Winkler R."/>
            <person name="Li W."/>
            <person name="Kniemeyer O."/>
            <person name="Schroeckh V."/>
            <person name="Hertweck C."/>
            <person name="Hube B."/>
            <person name="White T.C."/>
            <person name="Platzer M."/>
            <person name="Guthke R."/>
            <person name="Heitman J."/>
            <person name="Woestemeyer J."/>
            <person name="Zipfel P.F."/>
            <person name="Monod M."/>
            <person name="Brakhage A.A."/>
        </authorList>
    </citation>
    <scope>NUCLEOTIDE SEQUENCE [LARGE SCALE GENOMIC DNA]</scope>
    <source>
        <strain>ATCC MYA-4681 / CBS 112371</strain>
    </source>
</reference>
<name>DAPB_ARTBC</name>
<gene>
    <name type="primary">DAPB</name>
    <name type="ORF">ARB_06590</name>
</gene>
<keyword id="KW-0031">Aminopeptidase</keyword>
<keyword id="KW-0325">Glycoprotein</keyword>
<keyword id="KW-0378">Hydrolase</keyword>
<keyword id="KW-0472">Membrane</keyword>
<keyword id="KW-0645">Protease</keyword>
<keyword id="KW-1185">Reference proteome</keyword>
<keyword id="KW-0720">Serine protease</keyword>
<keyword id="KW-0735">Signal-anchor</keyword>
<keyword id="KW-0812">Transmembrane</keyword>
<keyword id="KW-1133">Transmembrane helix</keyword>
<keyword id="KW-0926">Vacuole</keyword>
<comment type="function">
    <text evidence="1">Type IV dipeptidyl-peptidase which removes N-terminal dipeptides sequentially from polypeptides having unsubstituted N-termini provided that the penultimate residue is proline.</text>
</comment>
<comment type="catalytic activity">
    <reaction evidence="3">
        <text>Release of an N-terminal dipeptide, Xaa-Yaa-|-Zaa-, from a polypeptide, preferentially when Yaa is Pro, provided Zaa is neither Pro nor hydroxyproline.</text>
        <dbReference type="EC" id="3.4.14.5"/>
    </reaction>
</comment>
<comment type="subcellular location">
    <subcellularLocation>
        <location evidence="1">Vacuole membrane</location>
        <topology evidence="1">Single-pass type II membrane protein</topology>
    </subcellularLocation>
    <text evidence="1">Lysosome-like vacuoles.</text>
</comment>
<comment type="similarity">
    <text evidence="5">Belongs to the peptidase S9B family.</text>
</comment>
<protein>
    <recommendedName>
        <fullName>Probable dipeptidyl-aminopeptidase B</fullName>
        <shortName>DPAP B</shortName>
        <ecNumber>3.4.14.5</ecNumber>
    </recommendedName>
</protein>